<organism>
    <name type="scientific">Pongo abelii</name>
    <name type="common">Sumatran orangutan</name>
    <name type="synonym">Pongo pygmaeus abelii</name>
    <dbReference type="NCBI Taxonomy" id="9601"/>
    <lineage>
        <taxon>Eukaryota</taxon>
        <taxon>Metazoa</taxon>
        <taxon>Chordata</taxon>
        <taxon>Craniata</taxon>
        <taxon>Vertebrata</taxon>
        <taxon>Euteleostomi</taxon>
        <taxon>Mammalia</taxon>
        <taxon>Eutheria</taxon>
        <taxon>Euarchontoglires</taxon>
        <taxon>Primates</taxon>
        <taxon>Haplorrhini</taxon>
        <taxon>Catarrhini</taxon>
        <taxon>Hominidae</taxon>
        <taxon>Pongo</taxon>
    </lineage>
</organism>
<keyword id="KW-0249">Electron transport</keyword>
<keyword id="KW-0472">Membrane</keyword>
<keyword id="KW-0496">Mitochondrion</keyword>
<keyword id="KW-0999">Mitochondrion inner membrane</keyword>
<keyword id="KW-0520">NAD</keyword>
<keyword id="KW-1185">Reference proteome</keyword>
<keyword id="KW-0679">Respiratory chain</keyword>
<keyword id="KW-1278">Translocase</keyword>
<keyword id="KW-0812">Transmembrane</keyword>
<keyword id="KW-1133">Transmembrane helix</keyword>
<keyword id="KW-0813">Transport</keyword>
<keyword id="KW-0830">Ubiquinone</keyword>
<proteinExistence type="inferred from homology"/>
<evidence type="ECO:0000250" key="1">
    <source>
        <dbReference type="UniProtKB" id="P03886"/>
    </source>
</evidence>
<evidence type="ECO:0000250" key="2">
    <source>
        <dbReference type="UniProtKB" id="P03887"/>
    </source>
</evidence>
<evidence type="ECO:0000255" key="3"/>
<evidence type="ECO:0000305" key="4"/>
<feature type="chain" id="PRO_0000117461" description="NADH-ubiquinone oxidoreductase chain 1">
    <location>
        <begin position="1"/>
        <end position="318"/>
    </location>
</feature>
<feature type="transmembrane region" description="Helical" evidence="3">
    <location>
        <begin position="2"/>
        <end position="22"/>
    </location>
</feature>
<feature type="transmembrane region" description="Helical" evidence="3">
    <location>
        <begin position="76"/>
        <end position="96"/>
    </location>
</feature>
<feature type="transmembrane region" description="Helical" evidence="3">
    <location>
        <begin position="100"/>
        <end position="120"/>
    </location>
</feature>
<feature type="transmembrane region" description="Helical" evidence="3">
    <location>
        <begin position="146"/>
        <end position="166"/>
    </location>
</feature>
<feature type="transmembrane region" description="Helical" evidence="3">
    <location>
        <begin position="171"/>
        <end position="191"/>
    </location>
</feature>
<feature type="transmembrane region" description="Helical" evidence="3">
    <location>
        <begin position="222"/>
        <end position="242"/>
    </location>
</feature>
<feature type="transmembrane region" description="Helical" evidence="3">
    <location>
        <begin position="253"/>
        <end position="273"/>
    </location>
</feature>
<feature type="transmembrane region" description="Helical" evidence="3">
    <location>
        <begin position="294"/>
        <end position="314"/>
    </location>
</feature>
<geneLocation type="mitochondrion"/>
<comment type="function">
    <text evidence="1">Core subunit of the mitochondrial membrane respiratory chain NADH dehydrogenase (Complex I) which catalyzes electron transfer from NADH through the respiratory chain, using ubiquinone as an electron acceptor. Essential for the catalytic activity and assembly of complex I.</text>
</comment>
<comment type="catalytic activity">
    <reaction evidence="1">
        <text>a ubiquinone + NADH + 5 H(+)(in) = a ubiquinol + NAD(+) + 4 H(+)(out)</text>
        <dbReference type="Rhea" id="RHEA:29091"/>
        <dbReference type="Rhea" id="RHEA-COMP:9565"/>
        <dbReference type="Rhea" id="RHEA-COMP:9566"/>
        <dbReference type="ChEBI" id="CHEBI:15378"/>
        <dbReference type="ChEBI" id="CHEBI:16389"/>
        <dbReference type="ChEBI" id="CHEBI:17976"/>
        <dbReference type="ChEBI" id="CHEBI:57540"/>
        <dbReference type="ChEBI" id="CHEBI:57945"/>
        <dbReference type="EC" id="7.1.1.2"/>
    </reaction>
</comment>
<comment type="subunit">
    <text evidence="2">Core subunit of respiratory chain NADH dehydrogenase (Complex I) which is composed of 45 different subunits.</text>
</comment>
<comment type="subcellular location">
    <subcellularLocation>
        <location evidence="2">Mitochondrion inner membrane</location>
        <topology evidence="3">Multi-pass membrane protein</topology>
    </subcellularLocation>
</comment>
<comment type="similarity">
    <text evidence="4">Belongs to the complex I subunit 1 family.</text>
</comment>
<sequence length="318" mass="35512">MPMINLLLLIMSILIAMAFLMLTERKILGHTQLRKGPNIVGPYGLLQPFADALKLFTKEPLKPSTSTITLYIISPALALTIALLLWTPLPMPIPLINLNLGLLFILAASSLTVYSILWSGWASNSNYALIGALRAVAQTISYEITLALILLSVLLMSGSFNLSALITTQEHSWLLLPSWPLALMWFISTLAETNRAPFDLTEGESELVSGFNTEYAAGPFALFFMAEYTNIILMNALTTMIFLGTTFNIHSPELYTTLFTIKTLLLTSLFLWIRSTYPRFRYDQLMHLLWKNFLPLTLALLMWHISVPIATSGIPPQT</sequence>
<reference key="1">
    <citation type="journal article" date="1996" name="J. Mol. Evol.">
        <title>The mitochondrial DNA molecule of Sumatran orangutan and a molecular proposal for two (Bornean and Sumatran) species of orangutan.</title>
        <authorList>
            <person name="Xu X."/>
            <person name="Arnason U."/>
        </authorList>
    </citation>
    <scope>NUCLEOTIDE SEQUENCE [LARGE SCALE GENOMIC DNA]</scope>
</reference>
<protein>
    <recommendedName>
        <fullName>NADH-ubiquinone oxidoreductase chain 1</fullName>
        <ecNumber evidence="1">7.1.1.2</ecNumber>
    </recommendedName>
    <alternativeName>
        <fullName>NADH dehydrogenase subunit 1</fullName>
    </alternativeName>
</protein>
<name>NU1M_PONAB</name>
<dbReference type="EC" id="7.1.1.2" evidence="1"/>
<dbReference type="EMBL" id="X97707">
    <property type="protein sequence ID" value="CAA66283.1"/>
    <property type="molecule type" value="Genomic_DNA"/>
</dbReference>
<dbReference type="RefSeq" id="NP_007835.1">
    <property type="nucleotide sequence ID" value="NC_002083.1"/>
</dbReference>
<dbReference type="SMR" id="P92690"/>
<dbReference type="FunCoup" id="P92690">
    <property type="interactions" value="615"/>
</dbReference>
<dbReference type="STRING" id="9601.ENSPPYP00000023439"/>
<dbReference type="Ensembl" id="ENSPPYT00000024424.2">
    <property type="protein sequence ID" value="ENSPPYP00000023439.1"/>
    <property type="gene ID" value="ENSPPYG00000020945.2"/>
</dbReference>
<dbReference type="GeneID" id="808473"/>
<dbReference type="KEGG" id="pon:808473"/>
<dbReference type="CTD" id="4535"/>
<dbReference type="eggNOG" id="KOG4770">
    <property type="taxonomic scope" value="Eukaryota"/>
</dbReference>
<dbReference type="GeneTree" id="ENSGT00390000006621"/>
<dbReference type="HOGENOM" id="CLU_015134_0_1_1"/>
<dbReference type="InParanoid" id="P92690"/>
<dbReference type="OMA" id="WSGWASN"/>
<dbReference type="TreeFam" id="TF352957"/>
<dbReference type="Proteomes" id="UP000001595">
    <property type="component" value="Mitochondrion"/>
</dbReference>
<dbReference type="GO" id="GO:0005743">
    <property type="term" value="C:mitochondrial inner membrane"/>
    <property type="evidence" value="ECO:0000250"/>
    <property type="project" value="UniProtKB"/>
</dbReference>
<dbReference type="GO" id="GO:0008137">
    <property type="term" value="F:NADH dehydrogenase (ubiquinone) activity"/>
    <property type="evidence" value="ECO:0000250"/>
    <property type="project" value="UniProtKB"/>
</dbReference>
<dbReference type="GO" id="GO:0006120">
    <property type="term" value="P:mitochondrial electron transport, NADH to ubiquinone"/>
    <property type="evidence" value="ECO:0000250"/>
    <property type="project" value="UniProtKB"/>
</dbReference>
<dbReference type="GO" id="GO:0032981">
    <property type="term" value="P:mitochondrial respiratory chain complex I assembly"/>
    <property type="evidence" value="ECO:0000250"/>
    <property type="project" value="UniProtKB"/>
</dbReference>
<dbReference type="HAMAP" id="MF_01350">
    <property type="entry name" value="NDH1_NuoH"/>
    <property type="match status" value="1"/>
</dbReference>
<dbReference type="InterPro" id="IPR001694">
    <property type="entry name" value="NADH_UbQ_OxRdtase_su1/FPO"/>
</dbReference>
<dbReference type="InterPro" id="IPR018086">
    <property type="entry name" value="NADH_UbQ_OxRdtase_su1_CS"/>
</dbReference>
<dbReference type="PANTHER" id="PTHR11432">
    <property type="entry name" value="NADH DEHYDROGENASE SUBUNIT 1"/>
    <property type="match status" value="1"/>
</dbReference>
<dbReference type="PANTHER" id="PTHR11432:SF3">
    <property type="entry name" value="NADH-UBIQUINONE OXIDOREDUCTASE CHAIN 1"/>
    <property type="match status" value="1"/>
</dbReference>
<dbReference type="Pfam" id="PF00146">
    <property type="entry name" value="NADHdh"/>
    <property type="match status" value="1"/>
</dbReference>
<dbReference type="PROSITE" id="PS00667">
    <property type="entry name" value="COMPLEX1_ND1_1"/>
    <property type="match status" value="1"/>
</dbReference>
<dbReference type="PROSITE" id="PS00668">
    <property type="entry name" value="COMPLEX1_ND1_2"/>
    <property type="match status" value="1"/>
</dbReference>
<accession>P92690</accession>
<gene>
    <name type="primary">MT-ND1</name>
    <name type="synonym">MTND1</name>
    <name type="synonym">NADH1</name>
    <name type="synonym">ND1</name>
</gene>